<evidence type="ECO:0000255" key="1"/>
<evidence type="ECO:0000269" key="2">
    <source>
    </source>
</evidence>
<evidence type="ECO:0000269" key="3">
    <source>
    </source>
</evidence>
<evidence type="ECO:0000269" key="4">
    <source>
    </source>
</evidence>
<evidence type="ECO:0000303" key="5">
    <source>
    </source>
</evidence>
<evidence type="ECO:0000305" key="6"/>
<evidence type="ECO:0007829" key="7">
    <source>
        <dbReference type="PDB" id="6YGE"/>
    </source>
</evidence>
<organism>
    <name type="scientific">Aspergillus fumigatus (strain ATCC MYA-4609 / CBS 101355 / FGSC A1100 / Af293)</name>
    <name type="common">Neosartorya fumigata</name>
    <dbReference type="NCBI Taxonomy" id="330879"/>
    <lineage>
        <taxon>Eukaryota</taxon>
        <taxon>Fungi</taxon>
        <taxon>Dikarya</taxon>
        <taxon>Ascomycota</taxon>
        <taxon>Pezizomycotina</taxon>
        <taxon>Eurotiomycetes</taxon>
        <taxon>Eurotiomycetidae</taxon>
        <taxon>Eurotiales</taxon>
        <taxon>Aspergillaceae</taxon>
        <taxon>Aspergillus</taxon>
        <taxon>Aspergillus subgen. Fumigati</taxon>
    </lineage>
</organism>
<sequence>MIFTNAILVISALLPATVLSLQHTEDSLFPARCWPDPCAGITFQNDTYVCGDPRLGPVVLPQKFPLNNELRTYARFGALCPAEFLDKWATDVAPNGTYIYPPANGFALDTEEQPILGNATLPVGMKLDRFGSEYGTFLAPLGAPYIERSLPPSNLNTFDGMYPYNYHVYQVTKEFVVGLGPIAPWFEQPGMGTQFVTYTNVLGLIDDGYLRRLDESEYDEKVEYSNPYTPGPNQ</sequence>
<gene>
    <name evidence="5" type="primary">nadA</name>
    <name type="ORF">AFUA_6G14470</name>
</gene>
<name>NADA_ASPFU</name>
<comment type="function">
    <text evidence="3">Conidial surface nicotinamide adenine dinucleotide glycohydrolase that cleave NAD(+) and NADP(+) but not their reduced counterparts, NADH and NADPH (PubMed:33712585). Lacks both ADP-ribosyl cyclase and base exchange activity and does not mediate synthesis of calcium messengers cADPR or NAADP (PubMed:33712585). Plays a role in pathogenicity by depleting the host's NAD(+) pool (PubMed:33712585).</text>
</comment>
<comment type="catalytic activity">
    <reaction evidence="3">
        <text>NAD(+) + H2O = ADP-D-ribose + nicotinamide + H(+)</text>
        <dbReference type="Rhea" id="RHEA:16301"/>
        <dbReference type="ChEBI" id="CHEBI:15377"/>
        <dbReference type="ChEBI" id="CHEBI:15378"/>
        <dbReference type="ChEBI" id="CHEBI:17154"/>
        <dbReference type="ChEBI" id="CHEBI:57540"/>
        <dbReference type="ChEBI" id="CHEBI:57967"/>
        <dbReference type="EC" id="3.2.2.5"/>
    </reaction>
    <physiologicalReaction direction="left-to-right" evidence="3">
        <dbReference type="Rhea" id="RHEA:16302"/>
    </physiologicalReaction>
</comment>
<comment type="catalytic activity">
    <reaction evidence="3">
        <text>NADP(+) + H2O = ADP-D-ribose 2'-phosphate + nicotinamide + H(+)</text>
        <dbReference type="Rhea" id="RHEA:19849"/>
        <dbReference type="ChEBI" id="CHEBI:15377"/>
        <dbReference type="ChEBI" id="CHEBI:15378"/>
        <dbReference type="ChEBI" id="CHEBI:17154"/>
        <dbReference type="ChEBI" id="CHEBI:58349"/>
        <dbReference type="ChEBI" id="CHEBI:58673"/>
    </reaction>
    <physiologicalReaction direction="left-to-right" evidence="3">
        <dbReference type="Rhea" id="RHEA:19850"/>
    </physiologicalReaction>
</comment>
<comment type="activity regulation">
    <text evidence="3">The catalytic activity is positively regulated by calcium via its binding to the calcium-binding site.</text>
</comment>
<comment type="biophysicochemical properties">
    <kinetics>
        <KM evidence="3">119 uM for NAD(+)</KM>
        <KM evidence="3">106 uM for NADP(+)</KM>
    </kinetics>
</comment>
<comment type="subunit">
    <text evidence="3">Homodimer.</text>
</comment>
<comment type="subcellular location">
    <subcellularLocation>
        <location evidence="3">Secreted</location>
    </subcellularLocation>
    <text evidence="3">Localizes on the surface of conidia.</text>
</comment>
<comment type="induction">
    <text evidence="2">Expression is up-regulated during conidiation of A.fumigatus strains displaying high adherence to pulmonary epithelial cells.</text>
</comment>
<comment type="domain">
    <text evidence="3">The C-terminus also contains a calcium binding site (residues 215-224) that might be involved in NADase activity regulation (PubMed:33712585). The calcium-binding site is not alweays present since it emerged in the order Eurotiales, which includes Aspergillus species (PubMed:33712585).</text>
</comment>
<comment type="PTM">
    <text evidence="4">N-glycosylated.</text>
</comment>
<comment type="disruption phenotype">
    <text evidence="3">Impairs NADase cleavage in conidia.</text>
</comment>
<comment type="similarity">
    <text evidence="6">Belongs to the fungal surface NADase family.</text>
</comment>
<proteinExistence type="evidence at protein level"/>
<feature type="signal peptide" evidence="3">
    <location>
        <begin position="1"/>
        <end position="20"/>
    </location>
</feature>
<feature type="chain" id="PRO_5004246304" description="Conidial surface nicotinamide adenine dinucleotide glycohydrolase nadA">
    <location>
        <begin position="21"/>
        <end position="234"/>
    </location>
</feature>
<feature type="domain" description="TNT" evidence="1">
    <location>
        <begin position="120"/>
        <end position="212"/>
    </location>
</feature>
<feature type="region of interest" description="Thump" evidence="3">
    <location>
        <begin position="21"/>
        <end position="117"/>
    </location>
</feature>
<feature type="active site" evidence="3">
    <location>
        <position position="129"/>
    </location>
</feature>
<feature type="active site" evidence="3">
    <location>
        <position position="194"/>
    </location>
</feature>
<feature type="binding site" evidence="3">
    <location>
        <position position="130"/>
    </location>
    <ligand>
        <name>NAD(+)</name>
        <dbReference type="ChEBI" id="CHEBI:57540"/>
    </ligand>
</feature>
<feature type="binding site" evidence="3">
    <location>
        <position position="136"/>
    </location>
    <ligand>
        <name>NAD(+)</name>
        <dbReference type="ChEBI" id="CHEBI:57540"/>
    </ligand>
</feature>
<feature type="binding site" evidence="3">
    <location>
        <position position="148"/>
    </location>
    <ligand>
        <name>NAD(+)</name>
        <dbReference type="ChEBI" id="CHEBI:57540"/>
    </ligand>
</feature>
<feature type="binding site" evidence="3">
    <location>
        <position position="216"/>
    </location>
    <ligand>
        <name>Ca(2+)</name>
        <dbReference type="ChEBI" id="CHEBI:29108"/>
    </ligand>
</feature>
<feature type="binding site" evidence="3">
    <location>
        <position position="219"/>
    </location>
    <ligand>
        <name>Ca(2+)</name>
        <dbReference type="ChEBI" id="CHEBI:29108"/>
    </ligand>
</feature>
<feature type="binding site" evidence="3">
    <location>
        <position position="220"/>
    </location>
    <ligand>
        <name>Ca(2+)</name>
        <dbReference type="ChEBI" id="CHEBI:29108"/>
    </ligand>
</feature>
<feature type="binding site" evidence="3">
    <location>
        <position position="223"/>
    </location>
    <ligand>
        <name>Ca(2+)</name>
        <dbReference type="ChEBI" id="CHEBI:29108"/>
    </ligand>
</feature>
<feature type="glycosylation site" description="N-linked (GlcNAc...) asparagine" evidence="3">
    <location>
        <position position="45"/>
    </location>
</feature>
<feature type="glycosylation site" description="N-linked (GlcNAc...) asparagine" evidence="3">
    <location>
        <position position="95"/>
    </location>
</feature>
<feature type="glycosylation site" description="N-linked (GlcNAc...) asparagine" evidence="3">
    <location>
        <position position="118"/>
    </location>
</feature>
<feature type="disulfide bond" evidence="3">
    <location>
        <begin position="33"/>
        <end position="80"/>
    </location>
</feature>
<feature type="disulfide bond" evidence="3">
    <location>
        <begin position="38"/>
        <end position="50"/>
    </location>
</feature>
<feature type="mutagenesis site" description="Abolishes the NADase activity." evidence="3">
    <original>R</original>
    <variation>A</variation>
    <location>
        <position position="129"/>
    </location>
</feature>
<feature type="mutagenesis site" description="Reduces the NADase activity." evidence="3">
    <original>F</original>
    <variation>A</variation>
    <location>
        <position position="130"/>
    </location>
</feature>
<feature type="mutagenesis site" description="Abolishes the NADase activity." evidence="3">
    <original>F</original>
    <variation>A</variation>
    <location>
        <position position="137"/>
    </location>
</feature>
<feature type="mutagenesis site" description="Abolishes the NADase activity." evidence="3">
    <original>Q</original>
    <variation>A</variation>
    <variation>K</variation>
    <location>
        <position position="194"/>
    </location>
</feature>
<feature type="mutagenesis site" description="Leads to a sevenfold reduction of the NADase activity." evidence="3">
    <original>DE</original>
    <variation>AA</variation>
    <location>
        <begin position="219"/>
        <end position="220"/>
    </location>
</feature>
<feature type="helix" evidence="7">
    <location>
        <begin position="31"/>
        <end position="33"/>
    </location>
</feature>
<feature type="turn" evidence="7">
    <location>
        <begin position="37"/>
        <end position="40"/>
    </location>
</feature>
<feature type="helix" evidence="7">
    <location>
        <begin position="49"/>
        <end position="51"/>
    </location>
</feature>
<feature type="helix" evidence="7">
    <location>
        <begin position="53"/>
        <end position="55"/>
    </location>
</feature>
<feature type="strand" evidence="7">
    <location>
        <begin position="57"/>
        <end position="59"/>
    </location>
</feature>
<feature type="helix" evidence="7">
    <location>
        <begin position="66"/>
        <end position="70"/>
    </location>
</feature>
<feature type="turn" evidence="7">
    <location>
        <begin position="75"/>
        <end position="78"/>
    </location>
</feature>
<feature type="helix" evidence="7">
    <location>
        <begin position="81"/>
        <end position="88"/>
    </location>
</feature>
<feature type="helix" evidence="7">
    <location>
        <begin position="103"/>
        <end position="105"/>
    </location>
</feature>
<feature type="strand" evidence="7">
    <location>
        <begin position="117"/>
        <end position="121"/>
    </location>
</feature>
<feature type="strand" evidence="7">
    <location>
        <begin position="126"/>
        <end position="131"/>
    </location>
</feature>
<feature type="strand" evidence="7">
    <location>
        <begin position="137"/>
        <end position="140"/>
    </location>
</feature>
<feature type="helix" evidence="7">
    <location>
        <begin position="145"/>
        <end position="148"/>
    </location>
</feature>
<feature type="helix" evidence="7">
    <location>
        <begin position="152"/>
        <end position="155"/>
    </location>
</feature>
<feature type="helix" evidence="7">
    <location>
        <begin position="163"/>
        <end position="165"/>
    </location>
</feature>
<feature type="strand" evidence="7">
    <location>
        <begin position="166"/>
        <end position="173"/>
    </location>
</feature>
<feature type="strand" evidence="7">
    <location>
        <begin position="175"/>
        <end position="182"/>
    </location>
</feature>
<feature type="strand" evidence="7">
    <location>
        <begin position="192"/>
        <end position="196"/>
    </location>
</feature>
<feature type="helix" evidence="7">
    <location>
        <begin position="201"/>
        <end position="206"/>
    </location>
</feature>
<feature type="strand" evidence="7">
    <location>
        <begin position="209"/>
        <end position="212"/>
    </location>
</feature>
<feature type="helix" evidence="7">
    <location>
        <begin position="215"/>
        <end position="217"/>
    </location>
</feature>
<feature type="strand" evidence="7">
    <location>
        <begin position="218"/>
        <end position="220"/>
    </location>
</feature>
<feature type="helix" evidence="7">
    <location>
        <begin position="221"/>
        <end position="224"/>
    </location>
</feature>
<feature type="strand" evidence="7">
    <location>
        <begin position="227"/>
        <end position="229"/>
    </location>
</feature>
<accession>Q4WL81</accession>
<keyword id="KW-0002">3D-structure</keyword>
<keyword id="KW-0106">Calcium</keyword>
<keyword id="KW-1015">Disulfide bond</keyword>
<keyword id="KW-0325">Glycoprotein</keyword>
<keyword id="KW-0378">Hydrolase</keyword>
<keyword id="KW-0479">Metal-binding</keyword>
<keyword id="KW-0520">NAD</keyword>
<keyword id="KW-1185">Reference proteome</keyword>
<keyword id="KW-0964">Secreted</keyword>
<keyword id="KW-0732">Signal</keyword>
<keyword id="KW-0843">Virulence</keyword>
<dbReference type="EC" id="3.2.2.5" evidence="3"/>
<dbReference type="EC" id="3.2.2.-" evidence="3"/>
<dbReference type="EMBL" id="AAHF01000006">
    <property type="protein sequence ID" value="EAL89283.1"/>
    <property type="molecule type" value="Genomic_DNA"/>
</dbReference>
<dbReference type="RefSeq" id="XP_751321.1">
    <property type="nucleotide sequence ID" value="XM_746228.1"/>
</dbReference>
<dbReference type="PDB" id="6YGE">
    <property type="method" value="X-ray"/>
    <property type="resolution" value="1.60 A"/>
    <property type="chains" value="A/B=26-234"/>
</dbReference>
<dbReference type="PDB" id="6YGF">
    <property type="method" value="X-ray"/>
    <property type="resolution" value="1.70 A"/>
    <property type="chains" value="A/B=25-234"/>
</dbReference>
<dbReference type="PDB" id="6YGG">
    <property type="method" value="X-ray"/>
    <property type="resolution" value="1.85 A"/>
    <property type="chains" value="A/B=26-234"/>
</dbReference>
<dbReference type="PDB" id="8PMR">
    <property type="method" value="X-ray"/>
    <property type="resolution" value="1.94 A"/>
    <property type="chains" value="A/B/C/D=1-234"/>
</dbReference>
<dbReference type="PDB" id="8PMS">
    <property type="method" value="X-ray"/>
    <property type="resolution" value="2.40 A"/>
    <property type="chains" value="A/B/C/D=1-223"/>
</dbReference>
<dbReference type="PDB" id="8R17">
    <property type="method" value="X-ray"/>
    <property type="resolution" value="2.30 A"/>
    <property type="chains" value="A=213-234"/>
</dbReference>
<dbReference type="PDBsum" id="6YGE"/>
<dbReference type="PDBsum" id="6YGF"/>
<dbReference type="PDBsum" id="6YGG"/>
<dbReference type="PDBsum" id="8PMR"/>
<dbReference type="PDBsum" id="8PMS"/>
<dbReference type="PDBsum" id="8R17"/>
<dbReference type="SMR" id="Q4WL81"/>
<dbReference type="GlyCosmos" id="Q4WL81">
    <property type="glycosylation" value="3 sites, No reported glycans"/>
</dbReference>
<dbReference type="iPTMnet" id="Q4WL81"/>
<dbReference type="EnsemblFungi" id="EAL89283">
    <property type="protein sequence ID" value="EAL89283"/>
    <property type="gene ID" value="AFUA_6G14470"/>
</dbReference>
<dbReference type="GeneID" id="3508638"/>
<dbReference type="KEGG" id="afm:AFUA_6G14470"/>
<dbReference type="VEuPathDB" id="FungiDB:Afu6g14470"/>
<dbReference type="eggNOG" id="ENOG502S1C9">
    <property type="taxonomic scope" value="Eukaryota"/>
</dbReference>
<dbReference type="HOGENOM" id="CLU_083054_0_0_1"/>
<dbReference type="InParanoid" id="Q4WL81"/>
<dbReference type="OMA" id="GPIRPWF"/>
<dbReference type="OrthoDB" id="2923349at2759"/>
<dbReference type="Proteomes" id="UP000002530">
    <property type="component" value="Chromosome 6"/>
</dbReference>
<dbReference type="GO" id="GO:0005576">
    <property type="term" value="C:extracellular region"/>
    <property type="evidence" value="ECO:0007669"/>
    <property type="project" value="UniProtKB-SubCell"/>
</dbReference>
<dbReference type="GO" id="GO:0046872">
    <property type="term" value="F:metal ion binding"/>
    <property type="evidence" value="ECO:0007669"/>
    <property type="project" value="UniProtKB-KW"/>
</dbReference>
<dbReference type="GO" id="GO:0050135">
    <property type="term" value="F:NADP+ nucleosidase activity"/>
    <property type="evidence" value="ECO:0007669"/>
    <property type="project" value="InterPro"/>
</dbReference>
<dbReference type="InterPro" id="IPR053024">
    <property type="entry name" value="Fungal_surface_NADase"/>
</dbReference>
<dbReference type="InterPro" id="IPR025331">
    <property type="entry name" value="TNT"/>
</dbReference>
<dbReference type="PANTHER" id="PTHR42059">
    <property type="entry name" value="TNT DOMAIN-CONTAINING PROTEIN"/>
    <property type="match status" value="1"/>
</dbReference>
<dbReference type="PANTHER" id="PTHR42059:SF1">
    <property type="entry name" value="TNT DOMAIN-CONTAINING PROTEIN"/>
    <property type="match status" value="1"/>
</dbReference>
<dbReference type="Pfam" id="PF14021">
    <property type="entry name" value="TNT"/>
    <property type="match status" value="1"/>
</dbReference>
<protein>
    <recommendedName>
        <fullName evidence="5">Conidial surface nicotinamide adenine dinucleotide glycohydrolase nadA</fullName>
        <shortName evidence="5">NADase</shortName>
    </recommendedName>
    <alternativeName>
        <fullName evidence="5">NAD(+) hydrolase nadA</fullName>
        <ecNumber evidence="3">3.2.2.5</ecNumber>
    </alternativeName>
    <alternativeName>
        <fullName evidence="5">NADP(+) hydrolase nadA</fullName>
        <ecNumber evidence="3">3.2.2.-</ecNumber>
    </alternativeName>
</protein>
<reference key="1">
    <citation type="journal article" date="2005" name="Nature">
        <title>Genomic sequence of the pathogenic and allergenic filamentous fungus Aspergillus fumigatus.</title>
        <authorList>
            <person name="Nierman W.C."/>
            <person name="Pain A."/>
            <person name="Anderson M.J."/>
            <person name="Wortman J.R."/>
            <person name="Kim H.S."/>
            <person name="Arroyo J."/>
            <person name="Berriman M."/>
            <person name="Abe K."/>
            <person name="Archer D.B."/>
            <person name="Bermejo C."/>
            <person name="Bennett J.W."/>
            <person name="Bowyer P."/>
            <person name="Chen D."/>
            <person name="Collins M."/>
            <person name="Coulsen R."/>
            <person name="Davies R."/>
            <person name="Dyer P.S."/>
            <person name="Farman M.L."/>
            <person name="Fedorova N."/>
            <person name="Fedorova N.D."/>
            <person name="Feldblyum T.V."/>
            <person name="Fischer R."/>
            <person name="Fosker N."/>
            <person name="Fraser A."/>
            <person name="Garcia J.L."/>
            <person name="Garcia M.J."/>
            <person name="Goble A."/>
            <person name="Goldman G.H."/>
            <person name="Gomi K."/>
            <person name="Griffith-Jones S."/>
            <person name="Gwilliam R."/>
            <person name="Haas B.J."/>
            <person name="Haas H."/>
            <person name="Harris D.E."/>
            <person name="Horiuchi H."/>
            <person name="Huang J."/>
            <person name="Humphray S."/>
            <person name="Jimenez J."/>
            <person name="Keller N."/>
            <person name="Khouri H."/>
            <person name="Kitamoto K."/>
            <person name="Kobayashi T."/>
            <person name="Konzack S."/>
            <person name="Kulkarni R."/>
            <person name="Kumagai T."/>
            <person name="Lafton A."/>
            <person name="Latge J.-P."/>
            <person name="Li W."/>
            <person name="Lord A."/>
            <person name="Lu C."/>
            <person name="Majoros W.H."/>
            <person name="May G.S."/>
            <person name="Miller B.L."/>
            <person name="Mohamoud Y."/>
            <person name="Molina M."/>
            <person name="Monod M."/>
            <person name="Mouyna I."/>
            <person name="Mulligan S."/>
            <person name="Murphy L.D."/>
            <person name="O'Neil S."/>
            <person name="Paulsen I."/>
            <person name="Penalva M.A."/>
            <person name="Pertea M."/>
            <person name="Price C."/>
            <person name="Pritchard B.L."/>
            <person name="Quail M.A."/>
            <person name="Rabbinowitsch E."/>
            <person name="Rawlins N."/>
            <person name="Rajandream M.A."/>
            <person name="Reichard U."/>
            <person name="Renauld H."/>
            <person name="Robson G.D."/>
            <person name="Rodriguez de Cordoba S."/>
            <person name="Rodriguez-Pena J.M."/>
            <person name="Ronning C.M."/>
            <person name="Rutter S."/>
            <person name="Salzberg S.L."/>
            <person name="Sanchez M."/>
            <person name="Sanchez-Ferrero J.C."/>
            <person name="Saunders D."/>
            <person name="Seeger K."/>
            <person name="Squares R."/>
            <person name="Squares S."/>
            <person name="Takeuchi M."/>
            <person name="Tekaia F."/>
            <person name="Turner G."/>
            <person name="Vazquez de Aldana C.R."/>
            <person name="Weidman J."/>
            <person name="White O."/>
            <person name="Woodward J.R."/>
            <person name="Yu J.-H."/>
            <person name="Fraser C.M."/>
            <person name="Galagan J.E."/>
            <person name="Asai K."/>
            <person name="Machida M."/>
            <person name="Hall N."/>
            <person name="Barrell B.G."/>
            <person name="Denning D.W."/>
        </authorList>
    </citation>
    <scope>NUCLEOTIDE SEQUENCE [LARGE SCALE GENOMIC DNA]</scope>
    <source>
        <strain>ATCC MYA-4609 / CBS 101355 / FGSC A1100 / Af293</strain>
    </source>
</reference>
<reference key="2">
    <citation type="journal article" date="2018" name="Cell. Microbiol.">
        <title>Aspergillus fumigatus adhesion factors in dormant conidia revealed through comparative phenotypic and transcriptomic analyses.</title>
        <authorList>
            <person name="Takahashi-Nakaguchi A."/>
            <person name="Sakai K."/>
            <person name="Takahashi H."/>
            <person name="Hagiwara D."/>
            <person name="Toyotome T."/>
            <person name="Chibana H."/>
            <person name="Watanabe A."/>
            <person name="Yaguchi T."/>
            <person name="Yamaguchi M."/>
            <person name="Kamei K."/>
            <person name="Gonoi T."/>
        </authorList>
    </citation>
    <scope>INDUCTION</scope>
</reference>
<reference key="3">
    <citation type="journal article" date="2021" name="Nat. Commun.">
        <title>Discovery of fungal surface NADases predominantly present in pathogenic species.</title>
        <authorList>
            <person name="Stroemland O."/>
            <person name="Kallio J.P."/>
            <person name="Pschibul A."/>
            <person name="Skoge R.H."/>
            <person name="Hardardottir H.M."/>
            <person name="Sverkeli L.J."/>
            <person name="Heinekamp T."/>
            <person name="Kniemeyer O."/>
            <person name="Migaud M."/>
            <person name="Makarov M.V."/>
            <person name="Gossmann T.I."/>
            <person name="Brakhage A.A."/>
            <person name="Ziegler M."/>
        </authorList>
    </citation>
    <scope>X-RAY CRYSTALLOGRAPHY (1.6 ANGSTROMS) IN COMPLEX WITH NAD</scope>
    <scope>IDENTIFICATION BY MASS SPECTROMETRY</scope>
    <scope>SUBCELLULAR LOCATION</scope>
    <scope>DISRUPTION PHENOTYPE</scope>
    <scope>SUBUNIT</scope>
    <scope>DISULFIDE BOND</scope>
    <scope>GLYCOSYLATION AT ASN-45; ASN-95 AND ASN-118</scope>
    <scope>FUNCTION</scope>
    <scope>DOMAIN</scope>
    <scope>ACTIVE SITE</scope>
    <scope>CATALYTIC ACTIVITY</scope>
    <scope>BIOPHYSICOCHEMICAL PROPERTIES</scope>
    <scope>ACTIVITY REGULATION</scope>
    <scope>MUTAGENESIS OF ARG-129; PHE-130; PHE-137; GLN-194 AND 219-ASP-GLU-220</scope>
</reference>
<reference key="4">
    <citation type="journal article" date="2021" name="Nat. Commun.">
        <title>Author Correction: Discovery of fungal surface NADases predominantly present in pathogenic species.</title>
        <authorList>
            <person name="Stroemland O."/>
            <person name="Kallio J.P."/>
            <person name="Pschibul A."/>
            <person name="Skoge R.H."/>
            <person name="Hardardottir H.M."/>
            <person name="Sverkeli L.J."/>
            <person name="Heinekamp T."/>
            <person name="Kniemeyer O."/>
            <person name="Migaud M."/>
            <person name="Makarov M.V."/>
            <person name="Gossmann T.I."/>
            <person name="Brakhage A.A."/>
            <person name="Ziegler M."/>
        </authorList>
    </citation>
    <scope>ERRATUM OF PUBMED:33712585</scope>
</reference>